<comment type="function">
    <text evidence="1">One of the primary rRNA binding proteins, it binds directly to 16S rRNA where it helps nucleate assembly of the platform of the 30S subunit by binding and bridging several RNA helices of the 16S rRNA.</text>
</comment>
<comment type="function">
    <text evidence="1">Forms an intersubunit bridge (bridge B4) with the 23S rRNA of the 50S subunit in the ribosome.</text>
</comment>
<comment type="subunit">
    <text evidence="1">Part of the 30S ribosomal subunit. Forms a bridge to the 50S subunit in the 70S ribosome, contacting the 23S rRNA.</text>
</comment>
<comment type="similarity">
    <text evidence="1">Belongs to the universal ribosomal protein uS15 family.</text>
</comment>
<organism>
    <name type="scientific">Nitrosococcus oceani (strain ATCC 19707 / BCRC 17464 / JCM 30415 / NCIMB 11848 / C-107)</name>
    <dbReference type="NCBI Taxonomy" id="323261"/>
    <lineage>
        <taxon>Bacteria</taxon>
        <taxon>Pseudomonadati</taxon>
        <taxon>Pseudomonadota</taxon>
        <taxon>Gammaproteobacteria</taxon>
        <taxon>Chromatiales</taxon>
        <taxon>Chromatiaceae</taxon>
        <taxon>Nitrosococcus</taxon>
    </lineage>
</organism>
<name>RS15_NITOC</name>
<feature type="chain" id="PRO_0000115491" description="Small ribosomal subunit protein uS15">
    <location>
        <begin position="1"/>
        <end position="89"/>
    </location>
</feature>
<proteinExistence type="inferred from homology"/>
<gene>
    <name evidence="1" type="primary">rpsO</name>
    <name type="ordered locus">Noc_2117</name>
</gene>
<protein>
    <recommendedName>
        <fullName evidence="1">Small ribosomal subunit protein uS15</fullName>
    </recommendedName>
    <alternativeName>
        <fullName evidence="2">30S ribosomal protein S15</fullName>
    </alternativeName>
</protein>
<dbReference type="EMBL" id="CP000127">
    <property type="protein sequence ID" value="ABA58577.1"/>
    <property type="molecule type" value="Genomic_DNA"/>
</dbReference>
<dbReference type="RefSeq" id="WP_011330864.1">
    <property type="nucleotide sequence ID" value="NC_007484.1"/>
</dbReference>
<dbReference type="SMR" id="Q3J9B9"/>
<dbReference type="FunCoup" id="Q3J9B9">
    <property type="interactions" value="510"/>
</dbReference>
<dbReference type="STRING" id="323261.Noc_2117"/>
<dbReference type="KEGG" id="noc:Noc_2117"/>
<dbReference type="eggNOG" id="COG0184">
    <property type="taxonomic scope" value="Bacteria"/>
</dbReference>
<dbReference type="HOGENOM" id="CLU_148518_0_0_6"/>
<dbReference type="InParanoid" id="Q3J9B9"/>
<dbReference type="Proteomes" id="UP000006838">
    <property type="component" value="Chromosome"/>
</dbReference>
<dbReference type="GO" id="GO:0022627">
    <property type="term" value="C:cytosolic small ribosomal subunit"/>
    <property type="evidence" value="ECO:0007669"/>
    <property type="project" value="TreeGrafter"/>
</dbReference>
<dbReference type="GO" id="GO:0019843">
    <property type="term" value="F:rRNA binding"/>
    <property type="evidence" value="ECO:0007669"/>
    <property type="project" value="UniProtKB-UniRule"/>
</dbReference>
<dbReference type="GO" id="GO:0003735">
    <property type="term" value="F:structural constituent of ribosome"/>
    <property type="evidence" value="ECO:0007669"/>
    <property type="project" value="InterPro"/>
</dbReference>
<dbReference type="GO" id="GO:0006412">
    <property type="term" value="P:translation"/>
    <property type="evidence" value="ECO:0007669"/>
    <property type="project" value="UniProtKB-UniRule"/>
</dbReference>
<dbReference type="CDD" id="cd00353">
    <property type="entry name" value="Ribosomal_S15p_S13e"/>
    <property type="match status" value="1"/>
</dbReference>
<dbReference type="FunFam" id="1.10.287.10:FF:000002">
    <property type="entry name" value="30S ribosomal protein S15"/>
    <property type="match status" value="1"/>
</dbReference>
<dbReference type="Gene3D" id="6.10.250.3130">
    <property type="match status" value="1"/>
</dbReference>
<dbReference type="Gene3D" id="1.10.287.10">
    <property type="entry name" value="S15/NS1, RNA-binding"/>
    <property type="match status" value="1"/>
</dbReference>
<dbReference type="HAMAP" id="MF_01343_B">
    <property type="entry name" value="Ribosomal_uS15_B"/>
    <property type="match status" value="1"/>
</dbReference>
<dbReference type="InterPro" id="IPR000589">
    <property type="entry name" value="Ribosomal_uS15"/>
</dbReference>
<dbReference type="InterPro" id="IPR005290">
    <property type="entry name" value="Ribosomal_uS15_bac-type"/>
</dbReference>
<dbReference type="InterPro" id="IPR009068">
    <property type="entry name" value="uS15_NS1_RNA-bd_sf"/>
</dbReference>
<dbReference type="NCBIfam" id="TIGR00952">
    <property type="entry name" value="S15_bact"/>
    <property type="match status" value="1"/>
</dbReference>
<dbReference type="PANTHER" id="PTHR23321">
    <property type="entry name" value="RIBOSOMAL PROTEIN S15, BACTERIAL AND ORGANELLAR"/>
    <property type="match status" value="1"/>
</dbReference>
<dbReference type="PANTHER" id="PTHR23321:SF26">
    <property type="entry name" value="SMALL RIBOSOMAL SUBUNIT PROTEIN US15M"/>
    <property type="match status" value="1"/>
</dbReference>
<dbReference type="Pfam" id="PF00312">
    <property type="entry name" value="Ribosomal_S15"/>
    <property type="match status" value="1"/>
</dbReference>
<dbReference type="SMART" id="SM01387">
    <property type="entry name" value="Ribosomal_S15"/>
    <property type="match status" value="1"/>
</dbReference>
<dbReference type="SUPFAM" id="SSF47060">
    <property type="entry name" value="S15/NS1 RNA-binding domain"/>
    <property type="match status" value="1"/>
</dbReference>
<keyword id="KW-1185">Reference proteome</keyword>
<keyword id="KW-0687">Ribonucleoprotein</keyword>
<keyword id="KW-0689">Ribosomal protein</keyword>
<keyword id="KW-0694">RNA-binding</keyword>
<keyword id="KW-0699">rRNA-binding</keyword>
<reference key="1">
    <citation type="journal article" date="2006" name="Appl. Environ. Microbiol.">
        <title>Complete genome sequence of the marine, chemolithoautotrophic, ammonia-oxidizing bacterium Nitrosococcus oceani ATCC 19707.</title>
        <authorList>
            <person name="Klotz M.G."/>
            <person name="Arp D.J."/>
            <person name="Chain P.S.G."/>
            <person name="El-Sheikh A.F."/>
            <person name="Hauser L.J."/>
            <person name="Hommes N.G."/>
            <person name="Larimer F.W."/>
            <person name="Malfatti S.A."/>
            <person name="Norton J.M."/>
            <person name="Poret-Peterson A.T."/>
            <person name="Vergez L.M."/>
            <person name="Ward B.B."/>
        </authorList>
    </citation>
    <scope>NUCLEOTIDE SEQUENCE [LARGE SCALE GENOMIC DNA]</scope>
    <source>
        <strain>ATCC 19707 / BCRC 17464 / JCM 30415 / NCIMB 11848 / C-107</strain>
    </source>
</reference>
<sequence length="89" mass="10384">MSLSSERKVQVIKEHQCSVNDTGSPEVQVALLSERITQLSGHFKQHTHDHHSRQGLLRAVGQRRKLLDYLKKKDLDRYRTLINKLGLRR</sequence>
<accession>Q3J9B9</accession>
<evidence type="ECO:0000255" key="1">
    <source>
        <dbReference type="HAMAP-Rule" id="MF_01343"/>
    </source>
</evidence>
<evidence type="ECO:0000305" key="2"/>